<comment type="function">
    <text evidence="1">One of two assembly initiator proteins, it binds directly to the 5'-end of the 23S rRNA, where it nucleates assembly of the 50S subunit.</text>
</comment>
<comment type="function">
    <text evidence="1">One of the proteins that surrounds the polypeptide exit tunnel on the outside of the subunit.</text>
</comment>
<comment type="subunit">
    <text evidence="1">Part of the 50S ribosomal subunit.</text>
</comment>
<comment type="similarity">
    <text evidence="1">Belongs to the universal ribosomal protein uL24 family.</text>
</comment>
<proteinExistence type="inferred from homology"/>
<keyword id="KW-1185">Reference proteome</keyword>
<keyword id="KW-0687">Ribonucleoprotein</keyword>
<keyword id="KW-0689">Ribosomal protein</keyword>
<keyword id="KW-0694">RNA-binding</keyword>
<keyword id="KW-0699">rRNA-binding</keyword>
<organism>
    <name type="scientific">Acholeplasma laidlawii (strain PG-8A)</name>
    <dbReference type="NCBI Taxonomy" id="441768"/>
    <lineage>
        <taxon>Bacteria</taxon>
        <taxon>Bacillati</taxon>
        <taxon>Mycoplasmatota</taxon>
        <taxon>Mollicutes</taxon>
        <taxon>Acholeplasmatales</taxon>
        <taxon>Acholeplasmataceae</taxon>
        <taxon>Acholeplasma</taxon>
    </lineage>
</organism>
<feature type="chain" id="PRO_0000355731" description="Large ribosomal subunit protein uL24">
    <location>
        <begin position="1"/>
        <end position="171"/>
    </location>
</feature>
<feature type="region of interest" description="Large ribosomal subunit protein uL24" evidence="1">
    <location>
        <begin position="1"/>
        <end position="124"/>
    </location>
</feature>
<feature type="region of interest" description="Disordered" evidence="2">
    <location>
        <begin position="108"/>
        <end position="171"/>
    </location>
</feature>
<feature type="region of interest" description="Unknown">
    <location>
        <begin position="125"/>
        <end position="171"/>
    </location>
</feature>
<protein>
    <recommendedName>
        <fullName evidence="1">Large ribosomal subunit protein uL24</fullName>
    </recommendedName>
    <alternativeName>
        <fullName>50S ribosomal protein L24</fullName>
    </alternativeName>
</protein>
<gene>
    <name evidence="1" type="primary">rplX</name>
    <name type="ordered locus">ACL_0098</name>
</gene>
<dbReference type="EMBL" id="CP000896">
    <property type="protein sequence ID" value="ABX80724.1"/>
    <property type="molecule type" value="Genomic_DNA"/>
</dbReference>
<dbReference type="SMR" id="A9NEE4"/>
<dbReference type="STRING" id="441768.ACL_0098"/>
<dbReference type="KEGG" id="acl:ACL_0098"/>
<dbReference type="eggNOG" id="COG0198">
    <property type="taxonomic scope" value="Bacteria"/>
</dbReference>
<dbReference type="HOGENOM" id="CLU_093315_2_2_14"/>
<dbReference type="OrthoDB" id="9807419at2"/>
<dbReference type="Proteomes" id="UP000008558">
    <property type="component" value="Chromosome"/>
</dbReference>
<dbReference type="GO" id="GO:1990904">
    <property type="term" value="C:ribonucleoprotein complex"/>
    <property type="evidence" value="ECO:0007669"/>
    <property type="project" value="UniProtKB-KW"/>
</dbReference>
<dbReference type="GO" id="GO:0005840">
    <property type="term" value="C:ribosome"/>
    <property type="evidence" value="ECO:0007669"/>
    <property type="project" value="UniProtKB-KW"/>
</dbReference>
<dbReference type="GO" id="GO:0019843">
    <property type="term" value="F:rRNA binding"/>
    <property type="evidence" value="ECO:0007669"/>
    <property type="project" value="UniProtKB-UniRule"/>
</dbReference>
<dbReference type="GO" id="GO:0003735">
    <property type="term" value="F:structural constituent of ribosome"/>
    <property type="evidence" value="ECO:0007669"/>
    <property type="project" value="InterPro"/>
</dbReference>
<dbReference type="GO" id="GO:0006412">
    <property type="term" value="P:translation"/>
    <property type="evidence" value="ECO:0007669"/>
    <property type="project" value="UniProtKB-UniRule"/>
</dbReference>
<dbReference type="CDD" id="cd06089">
    <property type="entry name" value="KOW_RPL26"/>
    <property type="match status" value="1"/>
</dbReference>
<dbReference type="Gene3D" id="2.30.30.30">
    <property type="match status" value="1"/>
</dbReference>
<dbReference type="HAMAP" id="MF_01326_B">
    <property type="entry name" value="Ribosomal_uL24_B"/>
    <property type="match status" value="1"/>
</dbReference>
<dbReference type="InterPro" id="IPR014722">
    <property type="entry name" value="Rib_uL2_dom2"/>
</dbReference>
<dbReference type="InterPro" id="IPR003256">
    <property type="entry name" value="Ribosomal_uL24"/>
</dbReference>
<dbReference type="InterPro" id="IPR041988">
    <property type="entry name" value="Ribosomal_uL24_KOW"/>
</dbReference>
<dbReference type="InterPro" id="IPR008991">
    <property type="entry name" value="Translation_prot_SH3-like_sf"/>
</dbReference>
<dbReference type="NCBIfam" id="TIGR01079">
    <property type="entry name" value="rplX_bact"/>
    <property type="match status" value="1"/>
</dbReference>
<dbReference type="PANTHER" id="PTHR12903">
    <property type="entry name" value="MITOCHONDRIAL RIBOSOMAL PROTEIN L24"/>
    <property type="match status" value="1"/>
</dbReference>
<dbReference type="Pfam" id="PF17136">
    <property type="entry name" value="ribosomal_L24"/>
    <property type="match status" value="1"/>
</dbReference>
<dbReference type="SUPFAM" id="SSF50104">
    <property type="entry name" value="Translation proteins SH3-like domain"/>
    <property type="match status" value="1"/>
</dbReference>
<name>RL24_ACHLI</name>
<sequence length="171" mass="18192">MNIKTGDTVVVIAGGDQFAVDKKGVKTRKTGRVLKIDRVKNTVIVEGVNIVKKHQRPTSANDKGGIVEIPAPIHASNVAILDPKTNTPTRIGHRIENGVKVRYAKKSGQTLDKAAKPAKTKAEKVEKAATSSTDKPAKVTKAAKEAKPVKAVKSQKVEKNTSVQKKGASGK</sequence>
<accession>A9NEE4</accession>
<reference key="1">
    <citation type="journal article" date="2011" name="J. Bacteriol.">
        <title>Complete genome and proteome of Acholeplasma laidlawii.</title>
        <authorList>
            <person name="Lazarev V.N."/>
            <person name="Levitskii S.A."/>
            <person name="Basovskii Y.I."/>
            <person name="Chukin M.M."/>
            <person name="Akopian T.A."/>
            <person name="Vereshchagin V.V."/>
            <person name="Kostrjukova E.S."/>
            <person name="Kovaleva G.Y."/>
            <person name="Kazanov M.D."/>
            <person name="Malko D.B."/>
            <person name="Vitreschak A.G."/>
            <person name="Sernova N.V."/>
            <person name="Gelfand M.S."/>
            <person name="Demina I.A."/>
            <person name="Serebryakova M.V."/>
            <person name="Galyamina M.A."/>
            <person name="Vtyurin N.N."/>
            <person name="Rogov S.I."/>
            <person name="Alexeev D.G."/>
            <person name="Ladygina V.G."/>
            <person name="Govorun V.M."/>
        </authorList>
    </citation>
    <scope>NUCLEOTIDE SEQUENCE [LARGE SCALE GENOMIC DNA]</scope>
    <source>
        <strain>PG-8A</strain>
    </source>
</reference>
<evidence type="ECO:0000255" key="1">
    <source>
        <dbReference type="HAMAP-Rule" id="MF_01326"/>
    </source>
</evidence>
<evidence type="ECO:0000256" key="2">
    <source>
        <dbReference type="SAM" id="MobiDB-lite"/>
    </source>
</evidence>